<keyword id="KW-0238">DNA-binding</keyword>
<keyword id="KW-0479">Metal-binding</keyword>
<keyword id="KW-0539">Nucleus</keyword>
<keyword id="KW-0804">Transcription</keyword>
<keyword id="KW-0805">Transcription regulation</keyword>
<gene>
    <name evidence="4" type="primary">AKTR-1</name>
</gene>
<accession>Q9P4V0</accession>
<organism>
    <name type="scientific">Alternaria alternata</name>
    <name type="common">Alternaria rot fungus</name>
    <name type="synonym">Torula alternata</name>
    <dbReference type="NCBI Taxonomy" id="5599"/>
    <lineage>
        <taxon>Eukaryota</taxon>
        <taxon>Fungi</taxon>
        <taxon>Dikarya</taxon>
        <taxon>Ascomycota</taxon>
        <taxon>Pezizomycotina</taxon>
        <taxon>Dothideomycetes</taxon>
        <taxon>Pleosporomycetidae</taxon>
        <taxon>Pleosporales</taxon>
        <taxon>Pleosporineae</taxon>
        <taxon>Pleosporaceae</taxon>
        <taxon>Alternaria</taxon>
        <taxon>Alternaria sect. Alternaria</taxon>
        <taxon>Alternaria alternata complex</taxon>
    </lineage>
</organism>
<sequence>MLQCAPKKNERLRGSCDFCTQSKLRCNKNKPSCRRCTIQQQPCVYSVARRTGRPPKHPRKANDCQEANGQHGEQDPVTSTPGGSCQQQSNHLLDVEGDGANFTLADASTTAQGRETAASSALDNALLVGETFGFSSLLDDPLIQSDDFLSFSLCMPPGEEEGHMASPRALNGSTGPCSPTVLSSIDVPHLPARFGFLESSVESGLHGRTGPHLVEQPDKIVPSSFSEMEKIYDEGLTFSGLDSAINAVTNNGKGEPSASGTMAAHPHSKRQCFCSTSMSKLQMLISHPTLCQKNSRARFDMTLFLEEVVFNIHRDVLQCLVCQSKSLHSLASLCICTDWVIEALRDVAQDLSSGQDNLGGFRAGLCPPKDKFSICVGRFVLDDQLRESCTRSLVKYRLRKLVPIMDTMMKLNYRGAGGALSQAIRTMVEDVRHKIESALGMMEL</sequence>
<proteinExistence type="predicted"/>
<name>AKTR1_ALTAL</name>
<feature type="chain" id="PRO_0000444841" description="Transcription activator AKTR-1">
    <location>
        <begin position="1"/>
        <end position="444"/>
    </location>
</feature>
<feature type="DNA-binding region" description="Zn(2)-C6 fungal-type" evidence="1">
    <location>
        <begin position="16"/>
        <end position="43"/>
    </location>
</feature>
<feature type="region of interest" description="Disordered" evidence="2">
    <location>
        <begin position="49"/>
        <end position="87"/>
    </location>
</feature>
<feature type="compositionally biased region" description="Basic residues" evidence="2">
    <location>
        <begin position="50"/>
        <end position="59"/>
    </location>
</feature>
<feature type="compositionally biased region" description="Polar residues" evidence="2">
    <location>
        <begin position="76"/>
        <end position="87"/>
    </location>
</feature>
<dbReference type="EMBL" id="AB035491">
    <property type="protein sequence ID" value="BAB07810.1"/>
    <property type="molecule type" value="Genomic_DNA"/>
</dbReference>
<dbReference type="SMR" id="Q9P4V0"/>
<dbReference type="PHI-base" id="PHI:2831"/>
<dbReference type="GO" id="GO:0005634">
    <property type="term" value="C:nucleus"/>
    <property type="evidence" value="ECO:0007669"/>
    <property type="project" value="UniProtKB-SubCell"/>
</dbReference>
<dbReference type="GO" id="GO:0003677">
    <property type="term" value="F:DNA binding"/>
    <property type="evidence" value="ECO:0007669"/>
    <property type="project" value="UniProtKB-KW"/>
</dbReference>
<dbReference type="GO" id="GO:0000981">
    <property type="term" value="F:DNA-binding transcription factor activity, RNA polymerase II-specific"/>
    <property type="evidence" value="ECO:0007669"/>
    <property type="project" value="InterPro"/>
</dbReference>
<dbReference type="GO" id="GO:0008270">
    <property type="term" value="F:zinc ion binding"/>
    <property type="evidence" value="ECO:0007669"/>
    <property type="project" value="InterPro"/>
</dbReference>
<dbReference type="CDD" id="cd00067">
    <property type="entry name" value="GAL4"/>
    <property type="match status" value="1"/>
</dbReference>
<dbReference type="Gene3D" id="4.10.240.10">
    <property type="entry name" value="Zn(2)-C6 fungal-type DNA-binding domain"/>
    <property type="match status" value="1"/>
</dbReference>
<dbReference type="InterPro" id="IPR050675">
    <property type="entry name" value="OAF3"/>
</dbReference>
<dbReference type="InterPro" id="IPR036864">
    <property type="entry name" value="Zn2-C6_fun-type_DNA-bd_sf"/>
</dbReference>
<dbReference type="InterPro" id="IPR001138">
    <property type="entry name" value="Zn2Cys6_DnaBD"/>
</dbReference>
<dbReference type="PANTHER" id="PTHR31069:SF31">
    <property type="entry name" value="MONODICTYPHENONE CLUSTER TRANSCRIPTION FACTOR-RELATED"/>
    <property type="match status" value="1"/>
</dbReference>
<dbReference type="PANTHER" id="PTHR31069">
    <property type="entry name" value="OLEATE-ACTIVATED TRANSCRIPTION FACTOR 1-RELATED"/>
    <property type="match status" value="1"/>
</dbReference>
<dbReference type="Pfam" id="PF00172">
    <property type="entry name" value="Zn_clus"/>
    <property type="match status" value="1"/>
</dbReference>
<dbReference type="PRINTS" id="PR00755">
    <property type="entry name" value="AFLATOXINBRP"/>
</dbReference>
<dbReference type="SMART" id="SM00066">
    <property type="entry name" value="GAL4"/>
    <property type="match status" value="1"/>
</dbReference>
<dbReference type="SUPFAM" id="SSF57701">
    <property type="entry name" value="Zn2/Cys6 DNA-binding domain"/>
    <property type="match status" value="1"/>
</dbReference>
<dbReference type="PROSITE" id="PS00463">
    <property type="entry name" value="ZN2_CY6_FUNGAL_1"/>
    <property type="match status" value="1"/>
</dbReference>
<dbReference type="PROSITE" id="PS50048">
    <property type="entry name" value="ZN2_CY6_FUNGAL_2"/>
    <property type="match status" value="1"/>
</dbReference>
<protein>
    <recommendedName>
        <fullName evidence="4">Transcription activator AKTR-1</fullName>
    </recommendedName>
    <alternativeName>
        <fullName evidence="4">AK-toxin biosynthesis regulator 1</fullName>
    </alternativeName>
</protein>
<reference key="1">
    <citation type="journal article" date="2000" name="Mol. Plant Microbe Interact.">
        <title>Structural and functional complexity of the genomic region controlling AK-toxin biosynthesis and pathogenicity in the Japanese pear pathotype of Alternaria alternata.</title>
        <authorList>
            <person name="Tanaka A."/>
            <person name="Tsuge T."/>
        </authorList>
    </citation>
    <scope>NUCLEOTIDE SEQUENCE [GENOMIC DNA]</scope>
    <scope>FUNCTION</scope>
    <scope>DISRUPTION PHENOTYPE</scope>
    <source>
        <strain>15A</strain>
    </source>
</reference>
<reference key="2">
    <citation type="journal article" date="2013" name="FEMS Microbiol. Rev.">
        <title>Host-selective toxins produced by the plant pathogenic fungus Alternaria alternata.</title>
        <authorList>
            <person name="Tsuge T."/>
            <person name="Harimoto Y."/>
            <person name="Akimitsu K."/>
            <person name="Ohtani K."/>
            <person name="Kodama M."/>
            <person name="Akagi Y."/>
            <person name="Egusa M."/>
            <person name="Yamamoto M."/>
            <person name="Otani H."/>
        </authorList>
    </citation>
    <scope>REVIEW ON HOST-SELECTIVE TOXINS</scope>
</reference>
<comment type="function">
    <text evidence="5 7">Transcription factor that regulates the expression of the gene clusters that mediate the biosynthesis of the host-selective toxins (HSTs) AK-toxins responsible for Japanese pear black spot disease by the Japanese pear pathotype (Probable). AK-toxins are esters of 9,10-epoxy 8-hydroxy 9-methyldecatrienoic acid (EDA) (PubMed:22846083). On cellular level, AK-toxins affect plasma membrane of susceptible cells and cause a sudden increase in loss of K(+) after a few minutes of toxin treatment (PubMed:22846083).</text>
</comment>
<comment type="subcellular location">
    <subcellularLocation>
        <location evidence="6">Nucleus</location>
    </subcellularLocation>
</comment>
<comment type="disruption phenotype">
    <text evidence="3">Abolishes the production of AF-toxins and their precuror 9,10-epoxy-8-hydroxy-9-methyl-decatrienoic acid; and impairs the pathogenicity.</text>
</comment>
<comment type="miscellaneous">
    <text evidence="3">Gene clusters encoding host-selective toxins (HSTs) are localized on conditionally dispensable chromosomes (CDCs), also called supernumerary chromosomes, where they are present in multiple copies (PubMed:10975654). The CDCs are not essential for saprophytic growth but controls host-selective pathogenicity (PubMed:10975654).</text>
</comment>
<evidence type="ECO:0000255" key="1">
    <source>
        <dbReference type="PROSITE-ProRule" id="PRU00227"/>
    </source>
</evidence>
<evidence type="ECO:0000256" key="2">
    <source>
        <dbReference type="SAM" id="MobiDB-lite"/>
    </source>
</evidence>
<evidence type="ECO:0000269" key="3">
    <source>
    </source>
</evidence>
<evidence type="ECO:0000303" key="4">
    <source>
    </source>
</evidence>
<evidence type="ECO:0000303" key="5">
    <source>
    </source>
</evidence>
<evidence type="ECO:0000305" key="6"/>
<evidence type="ECO:0000305" key="7">
    <source>
    </source>
</evidence>